<gene>
    <name type="primary">RH7</name>
    <name type="synonym">PRH75</name>
    <name type="ordered locus">At5g62190</name>
    <name type="ORF">MMI9.2</name>
</gene>
<organism>
    <name type="scientific">Arabidopsis thaliana</name>
    <name type="common">Mouse-ear cress</name>
    <dbReference type="NCBI Taxonomy" id="3702"/>
    <lineage>
        <taxon>Eukaryota</taxon>
        <taxon>Viridiplantae</taxon>
        <taxon>Streptophyta</taxon>
        <taxon>Embryophyta</taxon>
        <taxon>Tracheophyta</taxon>
        <taxon>Spermatophyta</taxon>
        <taxon>Magnoliopsida</taxon>
        <taxon>eudicotyledons</taxon>
        <taxon>Gunneridae</taxon>
        <taxon>Pentapetalae</taxon>
        <taxon>rosids</taxon>
        <taxon>malvids</taxon>
        <taxon>Brassicales</taxon>
        <taxon>Brassicaceae</taxon>
        <taxon>Camelineae</taxon>
        <taxon>Arabidopsis</taxon>
    </lineage>
</organism>
<protein>
    <recommendedName>
        <fullName>DEAD-box ATP-dependent RNA helicase 7</fullName>
        <ecNumber>3.6.4.13</ecNumber>
    </recommendedName>
</protein>
<evidence type="ECO:0000250" key="1"/>
<evidence type="ECO:0000255" key="2">
    <source>
        <dbReference type="PROSITE-ProRule" id="PRU00541"/>
    </source>
</evidence>
<evidence type="ECO:0000255" key="3">
    <source>
        <dbReference type="PROSITE-ProRule" id="PRU00542"/>
    </source>
</evidence>
<evidence type="ECO:0000256" key="4">
    <source>
        <dbReference type="SAM" id="MobiDB-lite"/>
    </source>
</evidence>
<evidence type="ECO:0000305" key="5"/>
<evidence type="ECO:0007744" key="6">
    <source>
    </source>
</evidence>
<comment type="catalytic activity">
    <reaction>
        <text>ATP + H2O = ADP + phosphate + H(+)</text>
        <dbReference type="Rhea" id="RHEA:13065"/>
        <dbReference type="ChEBI" id="CHEBI:15377"/>
        <dbReference type="ChEBI" id="CHEBI:15378"/>
        <dbReference type="ChEBI" id="CHEBI:30616"/>
        <dbReference type="ChEBI" id="CHEBI:43474"/>
        <dbReference type="ChEBI" id="CHEBI:456216"/>
        <dbReference type="EC" id="3.6.4.13"/>
    </reaction>
</comment>
<comment type="subcellular location">
    <subcellularLocation>
        <location evidence="1">Nucleus</location>
    </subcellularLocation>
</comment>
<comment type="domain">
    <text>The Q motif is unique to and characteristic of the DEAD box family of RNA helicases and controls ATP binding and hydrolysis.</text>
</comment>
<comment type="similarity">
    <text evidence="5">Belongs to the DEAD box helicase family. DDX21/DDX50 subfamily.</text>
</comment>
<dbReference type="EC" id="3.6.4.13"/>
<dbReference type="EMBL" id="X99938">
    <property type="protein sequence ID" value="CAA68194.1"/>
    <property type="molecule type" value="mRNA"/>
</dbReference>
<dbReference type="EMBL" id="AB019235">
    <property type="protein sequence ID" value="BAA97183.1"/>
    <property type="molecule type" value="Genomic_DNA"/>
</dbReference>
<dbReference type="EMBL" id="CP002688">
    <property type="protein sequence ID" value="AED97579.1"/>
    <property type="molecule type" value="Genomic_DNA"/>
</dbReference>
<dbReference type="EMBL" id="AY039576">
    <property type="protein sequence ID" value="AAK62631.1"/>
    <property type="molecule type" value="mRNA"/>
</dbReference>
<dbReference type="EMBL" id="AY056137">
    <property type="protein sequence ID" value="AAL07216.1"/>
    <property type="molecule type" value="mRNA"/>
</dbReference>
<dbReference type="EMBL" id="BT008581">
    <property type="protein sequence ID" value="AAP40408.1"/>
    <property type="molecule type" value="mRNA"/>
</dbReference>
<dbReference type="RefSeq" id="NP_201025.1">
    <property type="nucleotide sequence ID" value="NM_125613.3"/>
</dbReference>
<dbReference type="SMR" id="Q39189"/>
<dbReference type="BioGRID" id="21584">
    <property type="interactions" value="4"/>
</dbReference>
<dbReference type="FunCoup" id="Q39189">
    <property type="interactions" value="2952"/>
</dbReference>
<dbReference type="IntAct" id="Q39189">
    <property type="interactions" value="2"/>
</dbReference>
<dbReference type="STRING" id="3702.Q39189"/>
<dbReference type="iPTMnet" id="Q39189"/>
<dbReference type="PaxDb" id="3702-AT5G62190.1"/>
<dbReference type="ProteomicsDB" id="236896"/>
<dbReference type="EnsemblPlants" id="AT5G62190.1">
    <property type="protein sequence ID" value="AT5G62190.1"/>
    <property type="gene ID" value="AT5G62190"/>
</dbReference>
<dbReference type="GeneID" id="836340"/>
<dbReference type="Gramene" id="AT5G62190.1">
    <property type="protein sequence ID" value="AT5G62190.1"/>
    <property type="gene ID" value="AT5G62190"/>
</dbReference>
<dbReference type="KEGG" id="ath:AT5G62190"/>
<dbReference type="Araport" id="AT5G62190"/>
<dbReference type="TAIR" id="AT5G62190">
    <property type="gene designation" value="PRH75"/>
</dbReference>
<dbReference type="eggNOG" id="KOG0331">
    <property type="taxonomic scope" value="Eukaryota"/>
</dbReference>
<dbReference type="HOGENOM" id="CLU_003041_20_0_1"/>
<dbReference type="InParanoid" id="Q39189"/>
<dbReference type="OMA" id="YSGFHGR"/>
<dbReference type="OrthoDB" id="4255at2759"/>
<dbReference type="PhylomeDB" id="Q39189"/>
<dbReference type="BRENDA" id="3.6.4.13">
    <property type="organism ID" value="399"/>
</dbReference>
<dbReference type="CD-CODE" id="4299E36E">
    <property type="entry name" value="Nucleolus"/>
</dbReference>
<dbReference type="PRO" id="PR:Q39189"/>
<dbReference type="Proteomes" id="UP000006548">
    <property type="component" value="Chromosome 5"/>
</dbReference>
<dbReference type="ExpressionAtlas" id="Q39189">
    <property type="expression patterns" value="baseline and differential"/>
</dbReference>
<dbReference type="GO" id="GO:0005730">
    <property type="term" value="C:nucleolus"/>
    <property type="evidence" value="ECO:0000314"/>
    <property type="project" value="TAIR"/>
</dbReference>
<dbReference type="GO" id="GO:0005634">
    <property type="term" value="C:nucleus"/>
    <property type="evidence" value="ECO:0000314"/>
    <property type="project" value="TAIR"/>
</dbReference>
<dbReference type="GO" id="GO:0005524">
    <property type="term" value="F:ATP binding"/>
    <property type="evidence" value="ECO:0007669"/>
    <property type="project" value="UniProtKB-KW"/>
</dbReference>
<dbReference type="GO" id="GO:0016887">
    <property type="term" value="F:ATP hydrolysis activity"/>
    <property type="evidence" value="ECO:0007669"/>
    <property type="project" value="RHEA"/>
</dbReference>
<dbReference type="GO" id="GO:0017151">
    <property type="term" value="F:DEAD/H-box RNA helicase binding"/>
    <property type="evidence" value="ECO:0000250"/>
    <property type="project" value="TAIR"/>
</dbReference>
<dbReference type="GO" id="GO:0003723">
    <property type="term" value="F:RNA binding"/>
    <property type="evidence" value="ECO:0007669"/>
    <property type="project" value="UniProtKB-KW"/>
</dbReference>
<dbReference type="GO" id="GO:0003724">
    <property type="term" value="F:RNA helicase activity"/>
    <property type="evidence" value="ECO:0000314"/>
    <property type="project" value="TAIR"/>
</dbReference>
<dbReference type="GO" id="GO:0016070">
    <property type="term" value="P:RNA metabolic process"/>
    <property type="evidence" value="ECO:0000314"/>
    <property type="project" value="TAIR"/>
</dbReference>
<dbReference type="CDD" id="cd00268">
    <property type="entry name" value="DEADc"/>
    <property type="match status" value="1"/>
</dbReference>
<dbReference type="CDD" id="cd12937">
    <property type="entry name" value="GUCT_RH7_like"/>
    <property type="match status" value="1"/>
</dbReference>
<dbReference type="CDD" id="cd18787">
    <property type="entry name" value="SF2_C_DEAD"/>
    <property type="match status" value="1"/>
</dbReference>
<dbReference type="FunFam" id="3.30.70.2280:FF:000003">
    <property type="entry name" value="DEAD-box ATP-dependent RNA helicase 7"/>
    <property type="match status" value="1"/>
</dbReference>
<dbReference type="FunFam" id="3.40.50.300:FF:001168">
    <property type="entry name" value="nucleolar RNA helicase 2"/>
    <property type="match status" value="1"/>
</dbReference>
<dbReference type="Gene3D" id="3.30.70.2280">
    <property type="match status" value="1"/>
</dbReference>
<dbReference type="Gene3D" id="3.40.50.300">
    <property type="entry name" value="P-loop containing nucleotide triphosphate hydrolases"/>
    <property type="match status" value="2"/>
</dbReference>
<dbReference type="InterPro" id="IPR011545">
    <property type="entry name" value="DEAD/DEAH_box_helicase_dom"/>
</dbReference>
<dbReference type="InterPro" id="IPR050547">
    <property type="entry name" value="DEAD_box_RNA_helicases"/>
</dbReference>
<dbReference type="InterPro" id="IPR012562">
    <property type="entry name" value="GUCT"/>
</dbReference>
<dbReference type="InterPro" id="IPR014001">
    <property type="entry name" value="Helicase_ATP-bd"/>
</dbReference>
<dbReference type="InterPro" id="IPR001650">
    <property type="entry name" value="Helicase_C-like"/>
</dbReference>
<dbReference type="InterPro" id="IPR027417">
    <property type="entry name" value="P-loop_NTPase"/>
</dbReference>
<dbReference type="InterPro" id="IPR035979">
    <property type="entry name" value="RBD_domain_sf"/>
</dbReference>
<dbReference type="InterPro" id="IPR000629">
    <property type="entry name" value="RNA-helicase_DEAD-box_CS"/>
</dbReference>
<dbReference type="PANTHER" id="PTHR47963:SF8">
    <property type="entry name" value="ATP-DEPENDENT RNA HELICASE DEAD"/>
    <property type="match status" value="1"/>
</dbReference>
<dbReference type="PANTHER" id="PTHR47963">
    <property type="entry name" value="DEAD-BOX ATP-DEPENDENT RNA HELICASE 47, MITOCHONDRIAL"/>
    <property type="match status" value="1"/>
</dbReference>
<dbReference type="Pfam" id="PF00270">
    <property type="entry name" value="DEAD"/>
    <property type="match status" value="1"/>
</dbReference>
<dbReference type="Pfam" id="PF08152">
    <property type="entry name" value="GUCT"/>
    <property type="match status" value="1"/>
</dbReference>
<dbReference type="Pfam" id="PF00271">
    <property type="entry name" value="Helicase_C"/>
    <property type="match status" value="1"/>
</dbReference>
<dbReference type="SMART" id="SM00487">
    <property type="entry name" value="DEXDc"/>
    <property type="match status" value="1"/>
</dbReference>
<dbReference type="SMART" id="SM00490">
    <property type="entry name" value="HELICc"/>
    <property type="match status" value="1"/>
</dbReference>
<dbReference type="SUPFAM" id="SSF52540">
    <property type="entry name" value="P-loop containing nucleoside triphosphate hydrolases"/>
    <property type="match status" value="1"/>
</dbReference>
<dbReference type="SUPFAM" id="SSF54928">
    <property type="entry name" value="RNA-binding domain, RBD"/>
    <property type="match status" value="1"/>
</dbReference>
<dbReference type="PROSITE" id="PS00039">
    <property type="entry name" value="DEAD_ATP_HELICASE"/>
    <property type="match status" value="1"/>
</dbReference>
<dbReference type="PROSITE" id="PS51192">
    <property type="entry name" value="HELICASE_ATP_BIND_1"/>
    <property type="match status" value="1"/>
</dbReference>
<dbReference type="PROSITE" id="PS51194">
    <property type="entry name" value="HELICASE_CTER"/>
    <property type="match status" value="1"/>
</dbReference>
<dbReference type="PROSITE" id="PS51195">
    <property type="entry name" value="Q_MOTIF"/>
    <property type="match status" value="1"/>
</dbReference>
<name>RH7_ARATH</name>
<proteinExistence type="evidence at protein level"/>
<keyword id="KW-0067">ATP-binding</keyword>
<keyword id="KW-0347">Helicase</keyword>
<keyword id="KW-0378">Hydrolase</keyword>
<keyword id="KW-0547">Nucleotide-binding</keyword>
<keyword id="KW-0539">Nucleus</keyword>
<keyword id="KW-0597">Phosphoprotein</keyword>
<keyword id="KW-1185">Reference proteome</keyword>
<keyword id="KW-0694">RNA-binding</keyword>
<feature type="chain" id="PRO_0000239148" description="DEAD-box ATP-dependent RNA helicase 7">
    <location>
        <begin position="1"/>
        <end position="671"/>
    </location>
</feature>
<feature type="domain" description="Helicase ATP-binding" evidence="2">
    <location>
        <begin position="127"/>
        <end position="309"/>
    </location>
</feature>
<feature type="domain" description="Helicase C-terminal" evidence="3">
    <location>
        <begin position="339"/>
        <end position="479"/>
    </location>
</feature>
<feature type="region of interest" description="Disordered" evidence="4">
    <location>
        <begin position="1"/>
        <end position="84"/>
    </location>
</feature>
<feature type="region of interest" description="Disordered" evidence="4">
    <location>
        <begin position="627"/>
        <end position="671"/>
    </location>
</feature>
<feature type="short sequence motif" description="Q motif">
    <location>
        <begin position="96"/>
        <end position="124"/>
    </location>
</feature>
<feature type="short sequence motif" description="DEAD box">
    <location>
        <begin position="255"/>
        <end position="258"/>
    </location>
</feature>
<feature type="compositionally biased region" description="Basic and acidic residues" evidence="4">
    <location>
        <begin position="26"/>
        <end position="41"/>
    </location>
</feature>
<feature type="compositionally biased region" description="Basic residues" evidence="4">
    <location>
        <begin position="50"/>
        <end position="60"/>
    </location>
</feature>
<feature type="compositionally biased region" description="Gly residues" evidence="4">
    <location>
        <begin position="636"/>
        <end position="671"/>
    </location>
</feature>
<feature type="binding site" evidence="2">
    <location>
        <begin position="140"/>
        <end position="147"/>
    </location>
    <ligand>
        <name>ATP</name>
        <dbReference type="ChEBI" id="CHEBI:30616"/>
    </ligand>
</feature>
<feature type="modified residue" description="Phosphoserine" evidence="6">
    <location>
        <position position="40"/>
    </location>
</feature>
<feature type="modified residue" description="Phosphoserine" evidence="6">
    <location>
        <position position="42"/>
    </location>
</feature>
<feature type="sequence conflict" description="In Ref. 2; AAK62631." evidence="5" ref="2">
    <original>S</original>
    <variation>P</variation>
    <location>
        <position position="104"/>
    </location>
</feature>
<feature type="sequence conflict" description="In Ref. 2; AAK62631." evidence="5" ref="2">
    <original>A</original>
    <variation>E</variation>
    <location>
        <position position="196"/>
    </location>
</feature>
<feature type="sequence conflict" description="In Ref. 1; CAA68194." evidence="5" ref="1">
    <original>Y</original>
    <variation>I</variation>
    <location>
        <position position="214"/>
    </location>
</feature>
<feature type="sequence conflict" description="In Ref. 1; CAA68194." evidence="5" ref="1">
    <original>LQ</original>
    <variation>FK</variation>
    <location>
        <begin position="249"/>
        <end position="250"/>
    </location>
</feature>
<feature type="sequence conflict" description="In Ref. 1; CAA68194." evidence="5" ref="1">
    <original>A</original>
    <variation>P</variation>
    <location>
        <position position="446"/>
    </location>
</feature>
<sequence>MPSLMLSDKKEEKKMKKKMALDTPELDSKKGKKEQKLKLSDSDEEESEKKKSKKKDKKRKASEEEDEVKSDSSSEKKKSSKKVKLGVEDVEVDNPNAVSKFRISAPLREKLKANGIEALFPIQASTFDMVLDGADLVGRARTGQGKTLAFVLPILESLVNGPAKSKRKMGYGRSPSVLVLLPTRELAKQVAADFDAYGGSLGLSSCCLYGGDSYPVQEGKLKRGVDIVVGTPGRIKDHIERQNLDFSYLQFRVLDEADEMLRMGFVEDVELILGKVEDSTKVQTLLFSATLPSWVKNISNRFLKRDQKTIDLVGNDKMKASNSVRHIAIPCNKAAMARLIPDIISCYSSGGQTIIFAETKVQVSELSGLLDGSRALHGEIPQSQREVTLAGFRNGKFATLVATNVAARGLDINDVQLIIQCEPPREVEAYIHRSGRTGRAGNTGVAVTLYDSRKSSVSRIEKEAGIKFEHLAAPQPDEIARSGGMEAAEKVKQVCDSVVPAFLEAAKELLETSGLSAEVLLAKALAKTAGFTEIKKRSLLTSMENYVTLHLEAGKPIYSPSFVYGLLRRVLPDDKVEMIEGLSLTADKTGAVFDVKQSDLDLFIAGAQKSAGSMSLEVVKVMPKLQEREPLPQKRFGGGGRGNRFGGGGGNRFGGGGGRGRGGSGGRGQRY</sequence>
<accession>Q39189</accession>
<accession>Q94BX7</accession>
<accession>Q9LVB7</accession>
<reference key="1">
    <citation type="journal article" date="1997" name="Mol. Cell. Biol.">
        <title>PRH 75, a new nuclear-localized member of the DEAD-box protein family from higher plants.</title>
        <authorList>
            <person name="Lorkovic Z.J."/>
            <person name="Herrmann R.G."/>
            <person name="Oelmueller R."/>
        </authorList>
    </citation>
    <scope>NUCLEOTIDE SEQUENCE [MRNA]</scope>
    <source>
        <tissue>Hypocotyl</tissue>
    </source>
</reference>
<reference key="2">
    <citation type="journal article" date="2000" name="DNA Res.">
        <title>Structural analysis of Arabidopsis thaliana chromosome 5. X. Sequence features of the regions of 3,076,755 bp covered by sixty P1 and TAC clones.</title>
        <authorList>
            <person name="Sato S."/>
            <person name="Nakamura Y."/>
            <person name="Kaneko T."/>
            <person name="Katoh T."/>
            <person name="Asamizu E."/>
            <person name="Kotani H."/>
            <person name="Tabata S."/>
        </authorList>
    </citation>
    <scope>NUCLEOTIDE SEQUENCE [LARGE SCALE GENOMIC DNA]</scope>
    <source>
        <strain>cv. Columbia</strain>
    </source>
</reference>
<reference key="3">
    <citation type="journal article" date="2017" name="Plant J.">
        <title>Araport11: a complete reannotation of the Arabidopsis thaliana reference genome.</title>
        <authorList>
            <person name="Cheng C.Y."/>
            <person name="Krishnakumar V."/>
            <person name="Chan A.P."/>
            <person name="Thibaud-Nissen F."/>
            <person name="Schobel S."/>
            <person name="Town C.D."/>
        </authorList>
    </citation>
    <scope>GENOME REANNOTATION</scope>
    <source>
        <strain>cv. Columbia</strain>
    </source>
</reference>
<reference key="4">
    <citation type="journal article" date="2003" name="Science">
        <title>Empirical analysis of transcriptional activity in the Arabidopsis genome.</title>
        <authorList>
            <person name="Yamada K."/>
            <person name="Lim J."/>
            <person name="Dale J.M."/>
            <person name="Chen H."/>
            <person name="Shinn P."/>
            <person name="Palm C.J."/>
            <person name="Southwick A.M."/>
            <person name="Wu H.C."/>
            <person name="Kim C.J."/>
            <person name="Nguyen M."/>
            <person name="Pham P.K."/>
            <person name="Cheuk R.F."/>
            <person name="Karlin-Newmann G."/>
            <person name="Liu S.X."/>
            <person name="Lam B."/>
            <person name="Sakano H."/>
            <person name="Wu T."/>
            <person name="Yu G."/>
            <person name="Miranda M."/>
            <person name="Quach H.L."/>
            <person name="Tripp M."/>
            <person name="Chang C.H."/>
            <person name="Lee J.M."/>
            <person name="Toriumi M.J."/>
            <person name="Chan M.M."/>
            <person name="Tang C.C."/>
            <person name="Onodera C.S."/>
            <person name="Deng J.M."/>
            <person name="Akiyama K."/>
            <person name="Ansari Y."/>
            <person name="Arakawa T."/>
            <person name="Banh J."/>
            <person name="Banno F."/>
            <person name="Bowser L."/>
            <person name="Brooks S.Y."/>
            <person name="Carninci P."/>
            <person name="Chao Q."/>
            <person name="Choy N."/>
            <person name="Enju A."/>
            <person name="Goldsmith A.D."/>
            <person name="Gurjal M."/>
            <person name="Hansen N.F."/>
            <person name="Hayashizaki Y."/>
            <person name="Johnson-Hopson C."/>
            <person name="Hsuan V.W."/>
            <person name="Iida K."/>
            <person name="Karnes M."/>
            <person name="Khan S."/>
            <person name="Koesema E."/>
            <person name="Ishida J."/>
            <person name="Jiang P.X."/>
            <person name="Jones T."/>
            <person name="Kawai J."/>
            <person name="Kamiya A."/>
            <person name="Meyers C."/>
            <person name="Nakajima M."/>
            <person name="Narusaka M."/>
            <person name="Seki M."/>
            <person name="Sakurai T."/>
            <person name="Satou M."/>
            <person name="Tamse R."/>
            <person name="Vaysberg M."/>
            <person name="Wallender E.K."/>
            <person name="Wong C."/>
            <person name="Yamamura Y."/>
            <person name="Yuan S."/>
            <person name="Shinozaki K."/>
            <person name="Davis R.W."/>
            <person name="Theologis A."/>
            <person name="Ecker J.R."/>
        </authorList>
    </citation>
    <scope>NUCLEOTIDE SEQUENCE [LARGE SCALE MRNA]</scope>
    <source>
        <strain>cv. Columbia</strain>
    </source>
</reference>
<reference key="5">
    <citation type="journal article" date="2004" name="Plant Biotechnol. J.">
        <title>DEAD-box RNA helicases in Arabidopsis thaliana: establishing a link between quantitative expression, gene structure and evolution of a family of genes.</title>
        <authorList>
            <person name="Mingam A."/>
            <person name="Toffano-Nioche C."/>
            <person name="Brunaud V."/>
            <person name="Boudet N."/>
            <person name="Kreis M."/>
            <person name="Lecharny A."/>
        </authorList>
    </citation>
    <scope>GENE FAMILY</scope>
    <scope>NOMENCLATURE</scope>
</reference>
<reference key="6">
    <citation type="journal article" date="2009" name="Plant Physiol.">
        <title>Large-scale Arabidopsis phosphoproteome profiling reveals novel chloroplast kinase substrates and phosphorylation networks.</title>
        <authorList>
            <person name="Reiland S."/>
            <person name="Messerli G."/>
            <person name="Baerenfaller K."/>
            <person name="Gerrits B."/>
            <person name="Endler A."/>
            <person name="Grossmann J."/>
            <person name="Gruissem W."/>
            <person name="Baginsky S."/>
        </authorList>
    </citation>
    <scope>PHOSPHORYLATION [LARGE SCALE ANALYSIS] AT SER-40 AND SER-42</scope>
    <scope>IDENTIFICATION BY MASS SPECTROMETRY [LARGE SCALE ANALYSIS]</scope>
</reference>
<reference key="7">
    <citation type="journal article" date="2013" name="PLoS ONE">
        <title>Genome-wide comparative in silico analysis of the RNA helicase gene family in Zea mays and Glycine max: a comparison with Arabidopsis and Oryza sativa.</title>
        <authorList>
            <person name="Xu R."/>
            <person name="Zhang S."/>
            <person name="Huang J."/>
            <person name="Zheng C."/>
        </authorList>
    </citation>
    <scope>GENE FAMILY</scope>
</reference>